<evidence type="ECO:0000250" key="1"/>
<evidence type="ECO:0000255" key="2"/>
<evidence type="ECO:0000256" key="3">
    <source>
        <dbReference type="SAM" id="MobiDB-lite"/>
    </source>
</evidence>
<evidence type="ECO:0000305" key="4"/>
<reference key="1">
    <citation type="journal article" date="2005" name="Genome Biol.">
        <title>Full-length cDNAs from chicken bursal lymphocytes to facilitate gene function analysis.</title>
        <authorList>
            <person name="Caldwell R.B."/>
            <person name="Kierzek A.M."/>
            <person name="Arakawa H."/>
            <person name="Bezzubov Y."/>
            <person name="Zaim J."/>
            <person name="Fiedler P."/>
            <person name="Kutter S."/>
            <person name="Blagodatski A."/>
            <person name="Kostovska D."/>
            <person name="Koter M."/>
            <person name="Plachy J."/>
            <person name="Carninci P."/>
            <person name="Hayashizaki Y."/>
            <person name="Buerstedde J.-M."/>
        </authorList>
    </citation>
    <scope>NUCLEOTIDE SEQUENCE [LARGE SCALE MRNA]</scope>
    <source>
        <strain>CB</strain>
        <tissue>Bursa of Fabricius</tissue>
    </source>
</reference>
<gene>
    <name type="primary">TMEM11</name>
    <name type="ORF">RCJMB04_6k9</name>
</gene>
<proteinExistence type="evidence at transcript level"/>
<protein>
    <recommendedName>
        <fullName>Transmembrane protein 11, mitochondrial</fullName>
    </recommendedName>
</protein>
<accession>Q5ZLD4</accession>
<name>TMM11_CHICK</name>
<sequence>MAAWGRRRAGPGSTNSGGGGRERVTLSSTDCYIVHEIYNGENAQDQFEYELEQALEAQYKYIVIEPTRIGDETARWITVGNCLHKTAVLAGTTCLFTPLALPVDYSHYISLPAGVLSMACCTLYGISWQFDPCCKYQVEYDAYKLSRLPLHTLTSSTPVVLVRKDDLHRKRLHNTIALAALVYCVKKIYELYAV</sequence>
<comment type="function">
    <text evidence="1">Plays a role in mitochondrial morphogenesis.</text>
</comment>
<comment type="subcellular location">
    <subcellularLocation>
        <location evidence="1">Mitochondrion inner membrane</location>
        <topology evidence="1">Multi-pass membrane protein</topology>
    </subcellularLocation>
</comment>
<comment type="similarity">
    <text evidence="4">Belongs to the TMEM11 family.</text>
</comment>
<feature type="chain" id="PRO_0000367038" description="Transmembrane protein 11, mitochondrial">
    <location>
        <begin position="1"/>
        <end position="194"/>
    </location>
</feature>
<feature type="transmembrane region" description="Helical" evidence="2">
    <location>
        <begin position="88"/>
        <end position="104"/>
    </location>
</feature>
<feature type="transmembrane region" description="Helical" evidence="2">
    <location>
        <begin position="111"/>
        <end position="128"/>
    </location>
</feature>
<feature type="region of interest" description="Disordered" evidence="3">
    <location>
        <begin position="1"/>
        <end position="23"/>
    </location>
</feature>
<keyword id="KW-0472">Membrane</keyword>
<keyword id="KW-0496">Mitochondrion</keyword>
<keyword id="KW-0999">Mitochondrion inner membrane</keyword>
<keyword id="KW-1185">Reference proteome</keyword>
<keyword id="KW-0812">Transmembrane</keyword>
<keyword id="KW-1133">Transmembrane helix</keyword>
<organism>
    <name type="scientific">Gallus gallus</name>
    <name type="common">Chicken</name>
    <dbReference type="NCBI Taxonomy" id="9031"/>
    <lineage>
        <taxon>Eukaryota</taxon>
        <taxon>Metazoa</taxon>
        <taxon>Chordata</taxon>
        <taxon>Craniata</taxon>
        <taxon>Vertebrata</taxon>
        <taxon>Euteleostomi</taxon>
        <taxon>Archelosauria</taxon>
        <taxon>Archosauria</taxon>
        <taxon>Dinosauria</taxon>
        <taxon>Saurischia</taxon>
        <taxon>Theropoda</taxon>
        <taxon>Coelurosauria</taxon>
        <taxon>Aves</taxon>
        <taxon>Neognathae</taxon>
        <taxon>Galloanserae</taxon>
        <taxon>Galliformes</taxon>
        <taxon>Phasianidae</taxon>
        <taxon>Phasianinae</taxon>
        <taxon>Gallus</taxon>
    </lineage>
</organism>
<dbReference type="EMBL" id="AJ719800">
    <property type="protein sequence ID" value="CAG31459.1"/>
    <property type="molecule type" value="mRNA"/>
</dbReference>
<dbReference type="RefSeq" id="NP_001026637.1">
    <property type="nucleotide sequence ID" value="NM_001031466.3"/>
</dbReference>
<dbReference type="FunCoup" id="Q5ZLD4">
    <property type="interactions" value="1224"/>
</dbReference>
<dbReference type="STRING" id="9031.ENSGALP00000007558"/>
<dbReference type="PaxDb" id="9031-ENSGALP00000007558"/>
<dbReference type="GeneID" id="427663"/>
<dbReference type="KEGG" id="gga:427663"/>
<dbReference type="CTD" id="8834"/>
<dbReference type="VEuPathDB" id="HostDB:geneid_427663"/>
<dbReference type="eggNOG" id="ENOG502QUAI">
    <property type="taxonomic scope" value="Eukaryota"/>
</dbReference>
<dbReference type="InParanoid" id="Q5ZLD4"/>
<dbReference type="OMA" id="IGNCLHK"/>
<dbReference type="OrthoDB" id="9970856at2759"/>
<dbReference type="PhylomeDB" id="Q5ZLD4"/>
<dbReference type="PRO" id="PR:Q5ZLD4"/>
<dbReference type="Proteomes" id="UP000000539">
    <property type="component" value="Chromosome 14"/>
</dbReference>
<dbReference type="Bgee" id="ENSGALG00000004749">
    <property type="expression patterns" value="Expressed in skeletal muscle tissue and 12 other cell types or tissues"/>
</dbReference>
<dbReference type="GO" id="GO:0005743">
    <property type="term" value="C:mitochondrial inner membrane"/>
    <property type="evidence" value="ECO:0000250"/>
    <property type="project" value="UniProtKB"/>
</dbReference>
<dbReference type="GO" id="GO:0007007">
    <property type="term" value="P:inner mitochondrial membrane organization"/>
    <property type="evidence" value="ECO:0000318"/>
    <property type="project" value="GO_Central"/>
</dbReference>
<dbReference type="GO" id="GO:0007005">
    <property type="term" value="P:mitochondrion organization"/>
    <property type="evidence" value="ECO:0000250"/>
    <property type="project" value="UniProtKB"/>
</dbReference>
<dbReference type="InterPro" id="IPR026120">
    <property type="entry name" value="TMEM11"/>
</dbReference>
<dbReference type="PANTHER" id="PTHR15099">
    <property type="entry name" value="PROTEIN PM1"/>
    <property type="match status" value="1"/>
</dbReference>
<dbReference type="PANTHER" id="PTHR15099:SF2">
    <property type="entry name" value="TRANSMEMBRANE PROTEIN 11, MITOCHONDRIAL"/>
    <property type="match status" value="1"/>
</dbReference>
<dbReference type="Pfam" id="PF14972">
    <property type="entry name" value="Mito_morph_reg"/>
    <property type="match status" value="1"/>
</dbReference>